<name>YNF8_YEASO</name>
<feature type="chain" id="PRO_0000409326" description="Vacuolar membrane protein FOSTERSO_4058">
    <location>
        <begin position="1"/>
        <end position="314"/>
    </location>
</feature>
<feature type="transmembrane region" description="Helical" evidence="3">
    <location>
        <begin position="93"/>
        <end position="113"/>
    </location>
</feature>
<feature type="region of interest" description="Disordered" evidence="4">
    <location>
        <begin position="32"/>
        <end position="59"/>
    </location>
</feature>
<feature type="region of interest" description="Disordered" evidence="4">
    <location>
        <begin position="240"/>
        <end position="309"/>
    </location>
</feature>
<feature type="compositionally biased region" description="Basic and acidic residues" evidence="4">
    <location>
        <begin position="254"/>
        <end position="269"/>
    </location>
</feature>
<feature type="modified residue" description="Phosphoserine" evidence="2">
    <location>
        <position position="148"/>
    </location>
</feature>
<feature type="modified residue" description="Phosphoserine" evidence="2">
    <location>
        <position position="254"/>
    </location>
</feature>
<feature type="modified residue" description="Phosphoserine" evidence="2">
    <location>
        <position position="274"/>
    </location>
</feature>
<reference key="1">
    <citation type="journal article" date="2011" name="PLoS Genet.">
        <title>Whole-genome comparison reveals novel genetic elements that characterize the genome of industrial strains of Saccharomyces cerevisiae.</title>
        <authorList>
            <person name="Borneman A.R."/>
            <person name="Desany B.A."/>
            <person name="Riches D."/>
            <person name="Affourtit J.P."/>
            <person name="Forgan A.H."/>
            <person name="Pretorius I.S."/>
            <person name="Egholm M."/>
            <person name="Chambers P.J."/>
        </authorList>
    </citation>
    <scope>NUCLEOTIDE SEQUENCE [LARGE SCALE GENOMIC DNA]</scope>
    <source>
        <strain>FostersO</strain>
    </source>
</reference>
<organism>
    <name type="scientific">Saccharomyces cerevisiae (strain FostersO)</name>
    <name type="common">Baker's yeast</name>
    <dbReference type="NCBI Taxonomy" id="764101"/>
    <lineage>
        <taxon>Eukaryota</taxon>
        <taxon>Fungi</taxon>
        <taxon>Dikarya</taxon>
        <taxon>Ascomycota</taxon>
        <taxon>Saccharomycotina</taxon>
        <taxon>Saccharomycetes</taxon>
        <taxon>Saccharomycetales</taxon>
        <taxon>Saccharomycetaceae</taxon>
        <taxon>Saccharomyces</taxon>
    </lineage>
</organism>
<comment type="subcellular location">
    <subcellularLocation>
        <location evidence="1">Vacuole membrane</location>
        <topology evidence="1">Single-pass membrane protein</topology>
    </subcellularLocation>
</comment>
<comment type="similarity">
    <text evidence="5">Belongs to the PRM5 family.</text>
</comment>
<evidence type="ECO:0000250" key="1"/>
<evidence type="ECO:0000250" key="2">
    <source>
        <dbReference type="UniProtKB" id="P53947"/>
    </source>
</evidence>
<evidence type="ECO:0000255" key="3"/>
<evidence type="ECO:0000256" key="4">
    <source>
        <dbReference type="SAM" id="MobiDB-lite"/>
    </source>
</evidence>
<evidence type="ECO:0000305" key="5"/>
<gene>
    <name type="ORF">FOSTERSO_4058</name>
</gene>
<keyword id="KW-0472">Membrane</keyword>
<keyword id="KW-0597">Phosphoprotein</keyword>
<keyword id="KW-0812">Transmembrane</keyword>
<keyword id="KW-1133">Transmembrane helix</keyword>
<keyword id="KW-0926">Vacuole</keyword>
<protein>
    <recommendedName>
        <fullName>Vacuolar membrane protein FOSTERSO_4058</fullName>
    </recommendedName>
</protein>
<accession>E7NMC3</accession>
<sequence length="314" mass="34832">MXKKNFIPSVSLVRRDLPTLVTTTTSSTALSKPTSSVVSETSSKSLPSLTSSAFSTSSGXTSSSSLIVASITPPSTVGNPFILNAADKPNGTVYIAVGAVIGAIFISILIWWLVSXYLSRRFTMTNSYANDSKNLYRGHHKHSSSLQSNPFDINDEKSYMQDDWDSMSQLESSQYEDAASPFNPIQDPFTDNRRSLFISPTLQVSQYEKSHSRHQSKDTNIFIDDPSLYVGTYLEEEEEEERKLNLNRPQRAASPERKEKKINSMEGYHKRNQSSLGLIPVASATSNTSSPKKAHKRQAPSMFLDDVLNGREII</sequence>
<dbReference type="EMBL" id="AEEZ01000086">
    <property type="protein sequence ID" value="EGA60721.1"/>
    <property type="molecule type" value="Genomic_DNA"/>
</dbReference>
<dbReference type="HOGENOM" id="CLU_061224_0_0_1"/>
<dbReference type="OMA" id="MEGYHKR"/>
<dbReference type="OrthoDB" id="38581at4893"/>
<dbReference type="GO" id="GO:0005935">
    <property type="term" value="C:cellular bud neck"/>
    <property type="evidence" value="ECO:0007669"/>
    <property type="project" value="TreeGrafter"/>
</dbReference>
<dbReference type="GO" id="GO:0000324">
    <property type="term" value="C:fungal-type vacuole"/>
    <property type="evidence" value="ECO:0007669"/>
    <property type="project" value="TreeGrafter"/>
</dbReference>
<dbReference type="GO" id="GO:0005774">
    <property type="term" value="C:vacuolar membrane"/>
    <property type="evidence" value="ECO:0007669"/>
    <property type="project" value="UniProtKB-SubCell"/>
</dbReference>
<dbReference type="InterPro" id="IPR051009">
    <property type="entry name" value="PRM"/>
</dbReference>
<dbReference type="PANTHER" id="PTHR36089">
    <property type="entry name" value="CHITIN SYNTHASE 3 COMPLEX PROTEIN CSI2-RELATED"/>
    <property type="match status" value="1"/>
</dbReference>
<dbReference type="PANTHER" id="PTHR36089:SF1">
    <property type="entry name" value="CHITIN SYNTHASE 3 COMPLEX PROTEIN CSI2-RELATED"/>
    <property type="match status" value="1"/>
</dbReference>
<proteinExistence type="inferred from homology"/>